<proteinExistence type="evidence at protein level"/>
<gene>
    <name type="primary">sdrC</name>
    <name type="ordered locus">SAOUHSC_00544</name>
</gene>
<organism>
    <name type="scientific">Staphylococcus aureus (strain NCTC 8325 / PS 47)</name>
    <dbReference type="NCBI Taxonomy" id="93061"/>
    <lineage>
        <taxon>Bacteria</taxon>
        <taxon>Bacillati</taxon>
        <taxon>Bacillota</taxon>
        <taxon>Bacilli</taxon>
        <taxon>Bacillales</taxon>
        <taxon>Staphylococcaceae</taxon>
        <taxon>Staphylococcus</taxon>
    </lineage>
</organism>
<dbReference type="EMBL" id="CP000253">
    <property type="protein sequence ID" value="ABD29692.1"/>
    <property type="molecule type" value="Genomic_DNA"/>
</dbReference>
<dbReference type="RefSeq" id="WP_001060498.1">
    <property type="nucleotide sequence ID" value="NC_007795.1"/>
</dbReference>
<dbReference type="RefSeq" id="YP_499117.1">
    <property type="nucleotide sequence ID" value="NC_007795.1"/>
</dbReference>
<dbReference type="PDB" id="6LXH">
    <property type="method" value="X-ray"/>
    <property type="resolution" value="2.07 A"/>
    <property type="chains" value="A/B/C=178-496"/>
</dbReference>
<dbReference type="PDB" id="6LXS">
    <property type="method" value="X-ray"/>
    <property type="resolution" value="1.58 A"/>
    <property type="chains" value="A=178-496"/>
</dbReference>
<dbReference type="PDBsum" id="6LXH"/>
<dbReference type="PDBsum" id="6LXS"/>
<dbReference type="SMR" id="Q2G0L5"/>
<dbReference type="STRING" id="93061.SAOUHSC_00544"/>
<dbReference type="PaxDb" id="1280-SAXN108_0617"/>
<dbReference type="GeneID" id="3920824"/>
<dbReference type="KEGG" id="sao:SAOUHSC_00544"/>
<dbReference type="PATRIC" id="fig|93061.5.peg.490"/>
<dbReference type="eggNOG" id="COG3266">
    <property type="taxonomic scope" value="Bacteria"/>
</dbReference>
<dbReference type="eggNOG" id="COG4932">
    <property type="taxonomic scope" value="Bacteria"/>
</dbReference>
<dbReference type="HOGENOM" id="CLU_004137_1_2_9"/>
<dbReference type="OrthoDB" id="2278104at2"/>
<dbReference type="PRO" id="PR:Q2G0L5"/>
<dbReference type="Proteomes" id="UP000008816">
    <property type="component" value="Chromosome"/>
</dbReference>
<dbReference type="GO" id="GO:0005576">
    <property type="term" value="C:extracellular region"/>
    <property type="evidence" value="ECO:0007669"/>
    <property type="project" value="UniProtKB-KW"/>
</dbReference>
<dbReference type="GO" id="GO:0007155">
    <property type="term" value="P:cell adhesion"/>
    <property type="evidence" value="ECO:0007669"/>
    <property type="project" value="InterPro"/>
</dbReference>
<dbReference type="Gene3D" id="2.60.40.1280">
    <property type="match status" value="1"/>
</dbReference>
<dbReference type="Gene3D" id="2.60.40.1290">
    <property type="match status" value="1"/>
</dbReference>
<dbReference type="Gene3D" id="2.60.40.10">
    <property type="entry name" value="Immunoglobulins"/>
    <property type="match status" value="2"/>
</dbReference>
<dbReference type="InterPro" id="IPR011266">
    <property type="entry name" value="Adhesin_Fg-bd_dom_2"/>
</dbReference>
<dbReference type="InterPro" id="IPR008966">
    <property type="entry name" value="Adhesion_dom_sf"/>
</dbReference>
<dbReference type="InterPro" id="IPR011252">
    <property type="entry name" value="Fibrogen-bd_dom1"/>
</dbReference>
<dbReference type="InterPro" id="IPR013783">
    <property type="entry name" value="Ig-like_fold"/>
</dbReference>
<dbReference type="InterPro" id="IPR019931">
    <property type="entry name" value="LPXTG_anchor"/>
</dbReference>
<dbReference type="InterPro" id="IPR050972">
    <property type="entry name" value="SDr-like"/>
</dbReference>
<dbReference type="InterPro" id="IPR033764">
    <property type="entry name" value="Sdr_B"/>
</dbReference>
<dbReference type="InterPro" id="IPR041171">
    <property type="entry name" value="SDR_Ig"/>
</dbReference>
<dbReference type="InterPro" id="IPR005877">
    <property type="entry name" value="YSIRK_signal_dom"/>
</dbReference>
<dbReference type="NCBIfam" id="TIGR01167">
    <property type="entry name" value="LPXTG_anchor"/>
    <property type="match status" value="1"/>
</dbReference>
<dbReference type="NCBIfam" id="NF000535">
    <property type="entry name" value="MSCRAMM_SdrC"/>
    <property type="match status" value="1"/>
</dbReference>
<dbReference type="NCBIfam" id="TIGR01168">
    <property type="entry name" value="YSIRK_signal"/>
    <property type="match status" value="1"/>
</dbReference>
<dbReference type="PANTHER" id="PTHR34403">
    <property type="entry name" value="TOL-PAL SYSTEM PROTEIN TOLA"/>
    <property type="match status" value="1"/>
</dbReference>
<dbReference type="PANTHER" id="PTHR34403:SF8">
    <property type="entry name" value="TOL-PAL SYSTEM PROTEIN TOLA"/>
    <property type="match status" value="1"/>
</dbReference>
<dbReference type="Pfam" id="PF17961">
    <property type="entry name" value="Big_8"/>
    <property type="match status" value="1"/>
</dbReference>
<dbReference type="Pfam" id="PF00746">
    <property type="entry name" value="Gram_pos_anchor"/>
    <property type="match status" value="1"/>
</dbReference>
<dbReference type="Pfam" id="PF17210">
    <property type="entry name" value="SdrD_B"/>
    <property type="match status" value="2"/>
</dbReference>
<dbReference type="Pfam" id="PF10425">
    <property type="entry name" value="SdrG_C_C"/>
    <property type="match status" value="1"/>
</dbReference>
<dbReference type="Pfam" id="PF04650">
    <property type="entry name" value="YSIRK_signal"/>
    <property type="match status" value="1"/>
</dbReference>
<dbReference type="SUPFAM" id="SSF49401">
    <property type="entry name" value="Bacterial adhesins"/>
    <property type="match status" value="2"/>
</dbReference>
<dbReference type="SUPFAM" id="SSF117074">
    <property type="entry name" value="Hypothetical protein PA1324"/>
    <property type="match status" value="2"/>
</dbReference>
<dbReference type="PROSITE" id="PS50847">
    <property type="entry name" value="GRAM_POS_ANCHORING"/>
    <property type="match status" value="1"/>
</dbReference>
<protein>
    <recommendedName>
        <fullName>Serine-aspartate repeat-containing protein C</fullName>
    </recommendedName>
</protein>
<evidence type="ECO:0000250" key="1">
    <source>
        <dbReference type="UniProtKB" id="O86487"/>
    </source>
</evidence>
<evidence type="ECO:0000255" key="2"/>
<evidence type="ECO:0000255" key="3">
    <source>
        <dbReference type="PROSITE-ProRule" id="PRU00477"/>
    </source>
</evidence>
<evidence type="ECO:0000256" key="4">
    <source>
        <dbReference type="SAM" id="MobiDB-lite"/>
    </source>
</evidence>
<evidence type="ECO:0000269" key="5">
    <source>
    </source>
</evidence>
<evidence type="ECO:0000305" key="6"/>
<evidence type="ECO:0000305" key="7">
    <source>
    </source>
</evidence>
<evidence type="ECO:0007829" key="8">
    <source>
        <dbReference type="PDB" id="6LXH"/>
    </source>
</evidence>
<evidence type="ECO:0007829" key="9">
    <source>
        <dbReference type="PDB" id="6LXS"/>
    </source>
</evidence>
<accession>Q2G0L5</accession>
<keyword id="KW-0002">3D-structure</keyword>
<keyword id="KW-0106">Calcium</keyword>
<keyword id="KW-0134">Cell wall</keyword>
<keyword id="KW-0572">Peptidoglycan-anchor</keyword>
<keyword id="KW-1185">Reference proteome</keyword>
<keyword id="KW-0677">Repeat</keyword>
<keyword id="KW-0964">Secreted</keyword>
<keyword id="KW-0732">Signal</keyword>
<feature type="signal peptide" evidence="2">
    <location>
        <begin position="1"/>
        <end position="50"/>
    </location>
</feature>
<feature type="chain" id="PRO_0000281388" description="Serine-aspartate repeat-containing protein C">
    <location>
        <begin position="51"/>
        <end position="961"/>
    </location>
</feature>
<feature type="propeptide" id="PRO_0000281389" description="Removed by sortase" evidence="3">
    <location>
        <begin position="962"/>
        <end position="995"/>
    </location>
</feature>
<feature type="domain" description="CNA-B 1">
    <location>
        <begin position="496"/>
        <end position="606"/>
    </location>
</feature>
<feature type="domain" description="CNA-B 2">
    <location>
        <begin position="607"/>
        <end position="717"/>
    </location>
</feature>
<feature type="region of interest" description="Ligand binding A region">
    <location>
        <begin position="51"/>
        <end position="495"/>
    </location>
</feature>
<feature type="region of interest" description="Disordered" evidence="4">
    <location>
        <begin position="51"/>
        <end position="164"/>
    </location>
</feature>
<feature type="region of interest" description="Disordered" evidence="4">
    <location>
        <begin position="678"/>
        <end position="975"/>
    </location>
</feature>
<feature type="short sequence motif" description="YSIRK-G/S signaling motif" evidence="7">
    <location>
        <begin position="21"/>
        <end position="32"/>
    </location>
</feature>
<feature type="short sequence motif" description="LPXTG sorting signal" evidence="3">
    <location>
        <begin position="958"/>
        <end position="962"/>
    </location>
</feature>
<feature type="compositionally biased region" description="Polar residues" evidence="4">
    <location>
        <begin position="56"/>
        <end position="71"/>
    </location>
</feature>
<feature type="compositionally biased region" description="Basic and acidic residues" evidence="4">
    <location>
        <begin position="72"/>
        <end position="83"/>
    </location>
</feature>
<feature type="compositionally biased region" description="Polar residues" evidence="4">
    <location>
        <begin position="84"/>
        <end position="155"/>
    </location>
</feature>
<feature type="compositionally biased region" description="Acidic residues" evidence="4">
    <location>
        <begin position="685"/>
        <end position="695"/>
    </location>
</feature>
<feature type="compositionally biased region" description="Acidic residues" evidence="4">
    <location>
        <begin position="712"/>
        <end position="934"/>
    </location>
</feature>
<feature type="compositionally biased region" description="Low complexity" evidence="4">
    <location>
        <begin position="960"/>
        <end position="975"/>
    </location>
</feature>
<feature type="modified residue" description="Pentaglycyl murein peptidoglycan amidated threonine" evidence="3">
    <location>
        <position position="961"/>
    </location>
</feature>
<feature type="helix" evidence="9">
    <location>
        <begin position="186"/>
        <end position="188"/>
    </location>
</feature>
<feature type="strand" evidence="9">
    <location>
        <begin position="189"/>
        <end position="200"/>
    </location>
</feature>
<feature type="turn" evidence="9">
    <location>
        <begin position="205"/>
        <end position="207"/>
    </location>
</feature>
<feature type="strand" evidence="9">
    <location>
        <begin position="210"/>
        <end position="213"/>
    </location>
</feature>
<feature type="turn" evidence="8">
    <location>
        <begin position="214"/>
        <end position="217"/>
    </location>
</feature>
<feature type="strand" evidence="9">
    <location>
        <begin position="219"/>
        <end position="228"/>
    </location>
</feature>
<feature type="strand" evidence="9">
    <location>
        <begin position="237"/>
        <end position="242"/>
    </location>
</feature>
<feature type="strand" evidence="9">
    <location>
        <begin position="246"/>
        <end position="252"/>
    </location>
</feature>
<feature type="strand" evidence="9">
    <location>
        <begin position="256"/>
        <end position="261"/>
    </location>
</feature>
<feature type="strand" evidence="9">
    <location>
        <begin position="267"/>
        <end position="274"/>
    </location>
</feature>
<feature type="turn" evidence="9">
    <location>
        <begin position="275"/>
        <end position="278"/>
    </location>
</feature>
<feature type="strand" evidence="9">
    <location>
        <begin position="279"/>
        <end position="284"/>
    </location>
</feature>
<feature type="helix" evidence="9">
    <location>
        <begin position="286"/>
        <end position="289"/>
    </location>
</feature>
<feature type="strand" evidence="9">
    <location>
        <begin position="290"/>
        <end position="293"/>
    </location>
</feature>
<feature type="strand" evidence="9">
    <location>
        <begin position="295"/>
        <end position="304"/>
    </location>
</feature>
<feature type="turn" evidence="9">
    <location>
        <begin position="306"/>
        <end position="308"/>
    </location>
</feature>
<feature type="strand" evidence="9">
    <location>
        <begin position="314"/>
        <end position="322"/>
    </location>
</feature>
<feature type="strand" evidence="9">
    <location>
        <begin position="325"/>
        <end position="334"/>
    </location>
</feature>
<feature type="strand" evidence="9">
    <location>
        <begin position="342"/>
        <end position="350"/>
    </location>
</feature>
<feature type="turn" evidence="9">
    <location>
        <begin position="352"/>
        <end position="354"/>
    </location>
</feature>
<feature type="strand" evidence="9">
    <location>
        <begin position="357"/>
        <end position="363"/>
    </location>
</feature>
<feature type="strand" evidence="9">
    <location>
        <begin position="373"/>
        <end position="383"/>
    </location>
</feature>
<feature type="helix" evidence="9">
    <location>
        <begin position="386"/>
        <end position="388"/>
    </location>
</feature>
<feature type="strand" evidence="9">
    <location>
        <begin position="392"/>
        <end position="395"/>
    </location>
</feature>
<feature type="helix" evidence="9">
    <location>
        <begin position="399"/>
        <end position="401"/>
    </location>
</feature>
<feature type="helix" evidence="9">
    <location>
        <begin position="410"/>
        <end position="412"/>
    </location>
</feature>
<feature type="strand" evidence="9">
    <location>
        <begin position="413"/>
        <end position="415"/>
    </location>
</feature>
<feature type="helix" evidence="9">
    <location>
        <begin position="417"/>
        <end position="419"/>
    </location>
</feature>
<feature type="strand" evidence="9">
    <location>
        <begin position="423"/>
        <end position="425"/>
    </location>
</feature>
<feature type="turn" evidence="9">
    <location>
        <begin position="426"/>
        <end position="429"/>
    </location>
</feature>
<feature type="strand" evidence="9">
    <location>
        <begin position="430"/>
        <end position="434"/>
    </location>
</feature>
<feature type="turn" evidence="9">
    <location>
        <begin position="435"/>
        <end position="438"/>
    </location>
</feature>
<feature type="strand" evidence="9">
    <location>
        <begin position="440"/>
        <end position="442"/>
    </location>
</feature>
<feature type="strand" evidence="9">
    <location>
        <begin position="446"/>
        <end position="455"/>
    </location>
</feature>
<feature type="strand" evidence="9">
    <location>
        <begin position="463"/>
        <end position="472"/>
    </location>
</feature>
<feature type="strand" evidence="9">
    <location>
        <begin position="474"/>
        <end position="484"/>
    </location>
</feature>
<feature type="strand" evidence="9">
    <location>
        <begin position="487"/>
        <end position="493"/>
    </location>
</feature>
<comment type="function">
    <text evidence="1">Cell surface-associated calcium-binding protein which plays an important role in adhesion and pathogenesis. Mediates interactions with components of the extracellular matrix such as host NRXN1 to promote bacterial adhesion.</text>
</comment>
<comment type="subunit">
    <text evidence="1">Homodimerizes; via N2-Domain. Interacts with host NRXN1; this interaction mediates bacterial attachment to host cells.</text>
</comment>
<comment type="subcellular location">
    <subcellularLocation>
        <location evidence="3 5">Secreted</location>
        <location evidence="3 5">Cell wall</location>
        <topology evidence="3">Peptidoglycan-anchor</topology>
    </subcellularLocation>
    <text evidence="5 6">Found in a ring-like distribution on the cell surface (PubMed:18800056). Anchored to the cell wall by sortase A (Probable).</text>
</comment>
<comment type="similarity">
    <text evidence="6">Belongs to the serine-aspartate repeat-containing protein (SDr) family.</text>
</comment>
<name>SDRC_STAA8</name>
<reference key="1">
    <citation type="book" date="2006" name="Gram positive pathogens, 2nd edition">
        <title>The Staphylococcus aureus NCTC 8325 genome.</title>
        <editorList>
            <person name="Fischetti V."/>
            <person name="Novick R."/>
            <person name="Ferretti J."/>
            <person name="Portnoy D."/>
            <person name="Rood J."/>
        </editorList>
        <authorList>
            <person name="Gillaspy A.F."/>
            <person name="Worrell V."/>
            <person name="Orvis J."/>
            <person name="Roe B.A."/>
            <person name="Dyer D.W."/>
            <person name="Iandolo J.J."/>
        </authorList>
    </citation>
    <scope>NUCLEOTIDE SEQUENCE [LARGE SCALE GENOMIC DNA]</scope>
    <source>
        <strain>NCTC 8325 / PS 47</strain>
    </source>
</reference>
<reference key="2">
    <citation type="journal article" date="2008" name="EMBO J.">
        <title>Signal peptides direct surface proteins to two distinct envelope locations of Staphylococcus aureus.</title>
        <authorList>
            <person name="DeDent A."/>
            <person name="Bae T."/>
            <person name="Missiakas D.M."/>
            <person name="Schneewind O."/>
        </authorList>
    </citation>
    <scope>SUBCELLULAR LOCATION</scope>
    <source>
        <strain>RN4220</strain>
    </source>
</reference>
<sequence>MNNKKTATNRKGMIPNRLNKFSIRKYSVGTASILVGTTLIFGLSGHEAKAAEHTNGELNQSKNETTAPSENKTTKKVDSRQLKDNTQTATADQPKVTMSDSATVKETSSNMQSPQNATANQSTTKTSNVTTNDKSSTTYSNETDKSNLTQAKDVSTTPKTTTIKPRTLNRMAVNTVAAPQQGTNVNDKVHFSNIDIAIDKGHVNQTTGKTEFWATSSDVLKLKANYTIDDSVKEGDTFTFKYGQYFRPGSVRLPSQTQNLYNAQGNIIAKGIYDSTTNTTTYTFTNYVDQYTNVRGSFEQVAFAKRKNATTDKTAYKMEVTLGNDTYSEEIIVDYGNKKAQPLISSTNYINNEDLSRNMTAYVNQPKNTYTKQTFVTNLTGYKFNPNAKNFKIYEVTDQNQFVDSFTPDTSKLKDVTDQFDVIYSNDNKTATVDLMKGQTSSNKQYIIQQVAYPDNSSTDNGKIDYTLDTDKTKYSWSNSYSNVNGSSTANGDQKKYNLGDYVWEDTNKDGKQDANEKGIKGVYVILKDSNGKELDRTTTDENGKYQFTGLSNGTYSVEFSTPAGYTPTTANVGTDDAVDSDGLTTTGVIKDADNMTLDSGFYKTPKYSLGDYVWYDSNKDGKQDSTEKGIKGVKVTLQNEKGEVIGTTETDENGKYRFDNLDSGKYKVIFEKPAGLTQTGTNTTEDDKDADGGEVDVTITDHDDFTLDNGYYEEETSDSDSDSDSDSDSDSDSDSDSDSDSDSDSDSDSDSDSDSDSDSDSDSDSDSDSDSDSDSDSDSDSDSDSDSDSDSDSDSDSDSDSDSDSDSDSDSDSDSDSDSDSDSDSDSDSDSDSDSDSDSDSDSDSDSDSDSDSDSDNDSDSDSDSDSDSDSDSDSDSDSDSDSDSDSDSDSDSDSDSDSDSDSDSDSDSDSDSDSDSDSDSDNDSDSDSDSDSDAGKHTPAKPMSTVKDQHKTAKALPETGSENNNSNNGTLFGGLFAALGSLLLFGRRKKQNK</sequence>